<protein>
    <recommendedName>
        <fullName evidence="1">Aspartyl/glutamyl-tRNA(Asn/Gln) amidotransferase subunit C</fullName>
        <shortName evidence="1">Asp/Glu-ADT subunit C</shortName>
        <ecNumber evidence="1">6.3.5.-</ecNumber>
    </recommendedName>
</protein>
<comment type="function">
    <text evidence="1">Allows the formation of correctly charged Asn-tRNA(Asn) or Gln-tRNA(Gln) through the transamidation of misacylated Asp-tRNA(Asn) or Glu-tRNA(Gln) in organisms which lack either or both of asparaginyl-tRNA or glutaminyl-tRNA synthetases. The reaction takes place in the presence of glutamine and ATP through an activated phospho-Asp-tRNA(Asn) or phospho-Glu-tRNA(Gln).</text>
</comment>
<comment type="catalytic activity">
    <reaction evidence="1">
        <text>L-glutamyl-tRNA(Gln) + L-glutamine + ATP + H2O = L-glutaminyl-tRNA(Gln) + L-glutamate + ADP + phosphate + H(+)</text>
        <dbReference type="Rhea" id="RHEA:17521"/>
        <dbReference type="Rhea" id="RHEA-COMP:9681"/>
        <dbReference type="Rhea" id="RHEA-COMP:9684"/>
        <dbReference type="ChEBI" id="CHEBI:15377"/>
        <dbReference type="ChEBI" id="CHEBI:15378"/>
        <dbReference type="ChEBI" id="CHEBI:29985"/>
        <dbReference type="ChEBI" id="CHEBI:30616"/>
        <dbReference type="ChEBI" id="CHEBI:43474"/>
        <dbReference type="ChEBI" id="CHEBI:58359"/>
        <dbReference type="ChEBI" id="CHEBI:78520"/>
        <dbReference type="ChEBI" id="CHEBI:78521"/>
        <dbReference type="ChEBI" id="CHEBI:456216"/>
    </reaction>
</comment>
<comment type="catalytic activity">
    <reaction evidence="1">
        <text>L-aspartyl-tRNA(Asn) + L-glutamine + ATP + H2O = L-asparaginyl-tRNA(Asn) + L-glutamate + ADP + phosphate + 2 H(+)</text>
        <dbReference type="Rhea" id="RHEA:14513"/>
        <dbReference type="Rhea" id="RHEA-COMP:9674"/>
        <dbReference type="Rhea" id="RHEA-COMP:9677"/>
        <dbReference type="ChEBI" id="CHEBI:15377"/>
        <dbReference type="ChEBI" id="CHEBI:15378"/>
        <dbReference type="ChEBI" id="CHEBI:29985"/>
        <dbReference type="ChEBI" id="CHEBI:30616"/>
        <dbReference type="ChEBI" id="CHEBI:43474"/>
        <dbReference type="ChEBI" id="CHEBI:58359"/>
        <dbReference type="ChEBI" id="CHEBI:78515"/>
        <dbReference type="ChEBI" id="CHEBI:78516"/>
        <dbReference type="ChEBI" id="CHEBI:456216"/>
    </reaction>
</comment>
<comment type="subunit">
    <text evidence="1">Heterotrimer of A, B and C subunits.</text>
</comment>
<comment type="similarity">
    <text evidence="1">Belongs to the GatC family.</text>
</comment>
<proteinExistence type="inferred from homology"/>
<accession>Q1RHF0</accession>
<feature type="chain" id="PRO_0000274842" description="Aspartyl/glutamyl-tRNA(Asn/Gln) amidotransferase subunit C">
    <location>
        <begin position="1"/>
        <end position="100"/>
    </location>
</feature>
<reference key="1">
    <citation type="journal article" date="2006" name="PLoS Genet.">
        <title>Genome sequence of Rickettsia bellii illuminates the role of amoebae in gene exchanges between intracellular pathogens.</title>
        <authorList>
            <person name="Ogata H."/>
            <person name="La Scola B."/>
            <person name="Audic S."/>
            <person name="Renesto P."/>
            <person name="Blanc G."/>
            <person name="Robert C."/>
            <person name="Fournier P.-E."/>
            <person name="Claverie J.-M."/>
            <person name="Raoult D."/>
        </authorList>
    </citation>
    <scope>NUCLEOTIDE SEQUENCE [LARGE SCALE GENOMIC DNA]</scope>
    <source>
        <strain>RML369-C</strain>
    </source>
</reference>
<gene>
    <name evidence="1" type="primary">gatC</name>
    <name type="ordered locus">RBE_1133</name>
</gene>
<name>GATC_RICBR</name>
<evidence type="ECO:0000255" key="1">
    <source>
        <dbReference type="HAMAP-Rule" id="MF_00122"/>
    </source>
</evidence>
<organism>
    <name type="scientific">Rickettsia bellii (strain RML369-C)</name>
    <dbReference type="NCBI Taxonomy" id="336407"/>
    <lineage>
        <taxon>Bacteria</taxon>
        <taxon>Pseudomonadati</taxon>
        <taxon>Pseudomonadota</taxon>
        <taxon>Alphaproteobacteria</taxon>
        <taxon>Rickettsiales</taxon>
        <taxon>Rickettsiaceae</taxon>
        <taxon>Rickettsieae</taxon>
        <taxon>Rickettsia</taxon>
        <taxon>belli group</taxon>
    </lineage>
</organism>
<sequence>MITKEEVKKIAKLARLKFEEDKVEEFSSRLSSIMDMIDILNEIDCTDVKPLTSVCDMQARMRPDEVTSKDHSNELFDNVQGASQQLAKEVKYFITPKVVE</sequence>
<dbReference type="EC" id="6.3.5.-" evidence="1"/>
<dbReference type="EMBL" id="CP000087">
    <property type="protein sequence ID" value="ABE05214.1"/>
    <property type="molecule type" value="Genomic_DNA"/>
</dbReference>
<dbReference type="RefSeq" id="WP_011477792.1">
    <property type="nucleotide sequence ID" value="NC_007940.1"/>
</dbReference>
<dbReference type="SMR" id="Q1RHF0"/>
<dbReference type="KEGG" id="rbe:RBE_1133"/>
<dbReference type="eggNOG" id="COG0721">
    <property type="taxonomic scope" value="Bacteria"/>
</dbReference>
<dbReference type="HOGENOM" id="CLU_105899_2_0_5"/>
<dbReference type="OrthoDB" id="9794326at2"/>
<dbReference type="Proteomes" id="UP000001951">
    <property type="component" value="Chromosome"/>
</dbReference>
<dbReference type="GO" id="GO:0050566">
    <property type="term" value="F:asparaginyl-tRNA synthase (glutamine-hydrolyzing) activity"/>
    <property type="evidence" value="ECO:0007669"/>
    <property type="project" value="RHEA"/>
</dbReference>
<dbReference type="GO" id="GO:0005524">
    <property type="term" value="F:ATP binding"/>
    <property type="evidence" value="ECO:0007669"/>
    <property type="project" value="UniProtKB-KW"/>
</dbReference>
<dbReference type="GO" id="GO:0050567">
    <property type="term" value="F:glutaminyl-tRNA synthase (glutamine-hydrolyzing) activity"/>
    <property type="evidence" value="ECO:0007669"/>
    <property type="project" value="UniProtKB-UniRule"/>
</dbReference>
<dbReference type="GO" id="GO:0070681">
    <property type="term" value="P:glutaminyl-tRNAGln biosynthesis via transamidation"/>
    <property type="evidence" value="ECO:0007669"/>
    <property type="project" value="TreeGrafter"/>
</dbReference>
<dbReference type="GO" id="GO:0006450">
    <property type="term" value="P:regulation of translational fidelity"/>
    <property type="evidence" value="ECO:0007669"/>
    <property type="project" value="InterPro"/>
</dbReference>
<dbReference type="GO" id="GO:0006412">
    <property type="term" value="P:translation"/>
    <property type="evidence" value="ECO:0007669"/>
    <property type="project" value="UniProtKB-UniRule"/>
</dbReference>
<dbReference type="Gene3D" id="1.10.20.60">
    <property type="entry name" value="Glu-tRNAGln amidotransferase C subunit, N-terminal domain"/>
    <property type="match status" value="1"/>
</dbReference>
<dbReference type="HAMAP" id="MF_00122">
    <property type="entry name" value="GatC"/>
    <property type="match status" value="1"/>
</dbReference>
<dbReference type="InterPro" id="IPR036113">
    <property type="entry name" value="Asp/Glu-ADT_sf_sub_c"/>
</dbReference>
<dbReference type="InterPro" id="IPR003837">
    <property type="entry name" value="GatC"/>
</dbReference>
<dbReference type="NCBIfam" id="TIGR00135">
    <property type="entry name" value="gatC"/>
    <property type="match status" value="1"/>
</dbReference>
<dbReference type="PANTHER" id="PTHR15004">
    <property type="entry name" value="GLUTAMYL-TRNA(GLN) AMIDOTRANSFERASE SUBUNIT C, MITOCHONDRIAL"/>
    <property type="match status" value="1"/>
</dbReference>
<dbReference type="PANTHER" id="PTHR15004:SF0">
    <property type="entry name" value="GLUTAMYL-TRNA(GLN) AMIDOTRANSFERASE SUBUNIT C, MITOCHONDRIAL"/>
    <property type="match status" value="1"/>
</dbReference>
<dbReference type="Pfam" id="PF02686">
    <property type="entry name" value="GatC"/>
    <property type="match status" value="1"/>
</dbReference>
<dbReference type="SUPFAM" id="SSF141000">
    <property type="entry name" value="Glu-tRNAGln amidotransferase C subunit"/>
    <property type="match status" value="1"/>
</dbReference>
<keyword id="KW-0067">ATP-binding</keyword>
<keyword id="KW-0436">Ligase</keyword>
<keyword id="KW-0547">Nucleotide-binding</keyword>
<keyword id="KW-0648">Protein biosynthesis</keyword>